<gene>
    <name type="primary">pgaD</name>
    <name type="ORF">AFLA_074250</name>
</gene>
<dbReference type="EC" id="3.2.1.15"/>
<dbReference type="EMBL" id="EQ963472">
    <property type="protein sequence ID" value="EED56731.1"/>
    <property type="molecule type" value="Genomic_DNA"/>
</dbReference>
<dbReference type="RefSeq" id="XP_002372343.1">
    <property type="nucleotide sequence ID" value="XM_002372302.1"/>
</dbReference>
<dbReference type="SMR" id="B8MW78"/>
<dbReference type="STRING" id="332952.B8MW78"/>
<dbReference type="GlyCosmos" id="B8MW78">
    <property type="glycosylation" value="3 sites, No reported glycans"/>
</dbReference>
<dbReference type="EnsemblFungi" id="EED56731">
    <property type="protein sequence ID" value="EED56731"/>
    <property type="gene ID" value="AFLA_074250"/>
</dbReference>
<dbReference type="VEuPathDB" id="FungiDB:AFLA_002973"/>
<dbReference type="eggNOG" id="ENOG502QW1P">
    <property type="taxonomic scope" value="Eukaryota"/>
</dbReference>
<dbReference type="HOGENOM" id="CLU_040116_0_0_1"/>
<dbReference type="OMA" id="SGDSCNY"/>
<dbReference type="GO" id="GO:0005576">
    <property type="term" value="C:extracellular region"/>
    <property type="evidence" value="ECO:0000250"/>
    <property type="project" value="UniProtKB"/>
</dbReference>
<dbReference type="GO" id="GO:0004650">
    <property type="term" value="F:polygalacturonase activity"/>
    <property type="evidence" value="ECO:0000250"/>
    <property type="project" value="UniProtKB"/>
</dbReference>
<dbReference type="GO" id="GO:0071555">
    <property type="term" value="P:cell wall organization"/>
    <property type="evidence" value="ECO:0007669"/>
    <property type="project" value="UniProtKB-KW"/>
</dbReference>
<dbReference type="GO" id="GO:0045490">
    <property type="term" value="P:pectin catabolic process"/>
    <property type="evidence" value="ECO:0000250"/>
    <property type="project" value="UniProtKB"/>
</dbReference>
<dbReference type="FunFam" id="2.160.20.10:FF:000002">
    <property type="entry name" value="Endopolygalacturonase D"/>
    <property type="match status" value="1"/>
</dbReference>
<dbReference type="Gene3D" id="2.160.20.10">
    <property type="entry name" value="Single-stranded right-handed beta-helix, Pectin lyase-like"/>
    <property type="match status" value="1"/>
</dbReference>
<dbReference type="InterPro" id="IPR000743">
    <property type="entry name" value="Glyco_hydro_28"/>
</dbReference>
<dbReference type="InterPro" id="IPR050434">
    <property type="entry name" value="Glycosyl_hydrlase_28"/>
</dbReference>
<dbReference type="InterPro" id="IPR006626">
    <property type="entry name" value="PbH1"/>
</dbReference>
<dbReference type="InterPro" id="IPR012334">
    <property type="entry name" value="Pectin_lyas_fold"/>
</dbReference>
<dbReference type="InterPro" id="IPR011050">
    <property type="entry name" value="Pectin_lyase_fold/virulence"/>
</dbReference>
<dbReference type="PANTHER" id="PTHR31884:SF9">
    <property type="entry name" value="ENDOPOLYGALACTURONASE D-RELATED"/>
    <property type="match status" value="1"/>
</dbReference>
<dbReference type="PANTHER" id="PTHR31884">
    <property type="entry name" value="POLYGALACTURONASE"/>
    <property type="match status" value="1"/>
</dbReference>
<dbReference type="Pfam" id="PF00295">
    <property type="entry name" value="Glyco_hydro_28"/>
    <property type="match status" value="1"/>
</dbReference>
<dbReference type="SMART" id="SM00710">
    <property type="entry name" value="PbH1"/>
    <property type="match status" value="7"/>
</dbReference>
<dbReference type="SUPFAM" id="SSF51126">
    <property type="entry name" value="Pectin lyase-like"/>
    <property type="match status" value="1"/>
</dbReference>
<dbReference type="PROSITE" id="PS00502">
    <property type="entry name" value="POLYGALACTURONASE"/>
    <property type="match status" value="1"/>
</dbReference>
<accession>B8MW78</accession>
<evidence type="ECO:0000250" key="1"/>
<evidence type="ECO:0000255" key="2"/>
<evidence type="ECO:0000255" key="3">
    <source>
        <dbReference type="PROSITE-ProRule" id="PRU10052"/>
    </source>
</evidence>
<evidence type="ECO:0000305" key="4"/>
<protein>
    <recommendedName>
        <fullName>Probable endopolygalacturonase D</fullName>
        <shortName>PGD</shortName>
        <ecNumber>3.2.1.15</ecNumber>
    </recommendedName>
    <alternativeName>
        <fullName>Pectinase D</fullName>
    </alternativeName>
    <alternativeName>
        <fullName>Polygalacturonase D</fullName>
    </alternativeName>
</protein>
<reference key="1">
    <citation type="journal article" date="2015" name="Genome Announc.">
        <title>Genome sequence of Aspergillus flavus NRRL 3357, a strain that causes aflatoxin contamination of food and feed.</title>
        <authorList>
            <person name="Nierman W.C."/>
            <person name="Yu J."/>
            <person name="Fedorova-Abrams N.D."/>
            <person name="Losada L."/>
            <person name="Cleveland T.E."/>
            <person name="Bhatnagar D."/>
            <person name="Bennett J.W."/>
            <person name="Dean R."/>
            <person name="Payne G.A."/>
        </authorList>
    </citation>
    <scope>NUCLEOTIDE SEQUENCE [LARGE SCALE GENOMIC DNA]</scope>
    <source>
        <strain>ATCC 200026 / FGSC A1120 / IAM 13836 / NRRL 3357 / JCM 12722 / SRRC 167</strain>
    </source>
</reference>
<keyword id="KW-0961">Cell wall biogenesis/degradation</keyword>
<keyword id="KW-1015">Disulfide bond</keyword>
<keyword id="KW-0325">Glycoprotein</keyword>
<keyword id="KW-0326">Glycosidase</keyword>
<keyword id="KW-0378">Hydrolase</keyword>
<keyword id="KW-0677">Repeat</keyword>
<keyword id="KW-0964">Secreted</keyword>
<keyword id="KW-0732">Signal</keyword>
<organism>
    <name type="scientific">Aspergillus flavus (strain ATCC 200026 / FGSC A1120 / IAM 13836 / NRRL 3357 / JCM 12722 / SRRC 167)</name>
    <dbReference type="NCBI Taxonomy" id="332952"/>
    <lineage>
        <taxon>Eukaryota</taxon>
        <taxon>Fungi</taxon>
        <taxon>Dikarya</taxon>
        <taxon>Ascomycota</taxon>
        <taxon>Pezizomycotina</taxon>
        <taxon>Eurotiomycetes</taxon>
        <taxon>Eurotiomycetidae</taxon>
        <taxon>Eurotiales</taxon>
        <taxon>Aspergillaceae</taxon>
        <taxon>Aspergillus</taxon>
        <taxon>Aspergillus subgen. Circumdati</taxon>
    </lineage>
</organism>
<sequence length="492" mass="50759">MKRSALILSFLPLVFGCDNPKSPGHSCASVYSVSSAAASSFCATFTASTVTATTGVPEALLSNCDYKTKHLSSACSCLGTAAVPTVATPSSVSSVYITSATATPTSFTFKTSTAHIVKVAKAATSSTAVVTTPVSVPTASSSFTGNGGTTCTVTEYAAISSAVASCSNILLSDIYAPPSSTIDLQGLQTGAAVIFAGKTTFGDTADSDFDPIVVSGTSVTITGVEGHVIDGNGAAYWDGQGSNGGSDKPDHFFVVKDMYNSRIENLYIQNWPVHCFEIESTEHLTVSGLTLNNSAGDAANSKSDGDPAAHNSDGFDIKESSYFTLENTWVHNQDDCVAVTSGTDIVVDGMYCYGGHGLSIGSIGGKSDNTVNGVTFSNSQVISSQNGCRIKTNSGETGEVYNIRYENITLSDISDYGIDVQQDYLNGGPTGEPTNGVTIANVTFVDVTGTMSDGKDYYILCGDDSCSNFVFDGVSITGGSGDNCNYPSTGCP</sequence>
<comment type="function">
    <text evidence="1">Involved in maceration and soft-rotting of plant tissue. Hydrolyzes the 1,4-alpha glycosidic bonds of de-esterified pectate in the smooth region of the plant cell wall (By similarity).</text>
</comment>
<comment type="catalytic activity">
    <reaction>
        <text>(1,4-alpha-D-galacturonosyl)n+m + H2O = (1,4-alpha-D-galacturonosyl)n + (1,4-alpha-D-galacturonosyl)m.</text>
        <dbReference type="EC" id="3.2.1.15"/>
    </reaction>
</comment>
<comment type="subcellular location">
    <subcellularLocation>
        <location evidence="1">Secreted</location>
    </subcellularLocation>
</comment>
<comment type="similarity">
    <text evidence="4">Belongs to the glycosyl hydrolase 28 family.</text>
</comment>
<feature type="signal peptide" evidence="2">
    <location>
        <begin position="1"/>
        <end position="16"/>
    </location>
</feature>
<feature type="chain" id="PRO_0000393661" description="Probable endopolygalacturonase D">
    <location>
        <begin position="17"/>
        <end position="492"/>
    </location>
</feature>
<feature type="repeat" description="PbH1 1">
    <location>
        <begin position="216"/>
        <end position="238"/>
    </location>
</feature>
<feature type="repeat" description="PbH1 2">
    <location>
        <begin position="258"/>
        <end position="280"/>
    </location>
</feature>
<feature type="repeat" description="PbH1 3">
    <location>
        <begin position="281"/>
        <end position="319"/>
    </location>
</feature>
<feature type="repeat" description="PbH1 4">
    <location>
        <begin position="320"/>
        <end position="341"/>
    </location>
</feature>
<feature type="repeat" description="PbH1 5">
    <location>
        <begin position="371"/>
        <end position="392"/>
    </location>
</feature>
<feature type="repeat" description="PbH1 6">
    <location>
        <begin position="400"/>
        <end position="422"/>
    </location>
</feature>
<feature type="repeat" description="PbH1 7">
    <location>
        <begin position="434"/>
        <end position="478"/>
    </location>
</feature>
<feature type="active site" description="Proton donor" evidence="3">
    <location>
        <position position="334"/>
    </location>
</feature>
<feature type="active site" evidence="3">
    <location>
        <position position="356"/>
    </location>
</feature>
<feature type="glycosylation site" description="N-linked (GlcNAc...) asparagine" evidence="2">
    <location>
        <position position="292"/>
    </location>
</feature>
<feature type="glycosylation site" description="N-linked (GlcNAc...) asparagine" evidence="2">
    <location>
        <position position="407"/>
    </location>
</feature>
<feature type="glycosylation site" description="N-linked (GlcNAc...) asparagine" evidence="2">
    <location>
        <position position="441"/>
    </location>
</feature>
<feature type="disulfide bond" evidence="1">
    <location>
        <begin position="151"/>
        <end position="166"/>
    </location>
</feature>
<feature type="disulfide bond" evidence="1">
    <location>
        <begin position="336"/>
        <end position="352"/>
    </location>
</feature>
<feature type="disulfide bond" evidence="1">
    <location>
        <begin position="461"/>
        <end position="466"/>
    </location>
</feature>
<feature type="disulfide bond" evidence="1">
    <location>
        <begin position="484"/>
        <end position="491"/>
    </location>
</feature>
<name>PGLRD_ASPFN</name>
<proteinExistence type="inferred from homology"/>